<comment type="function">
    <text>Catalyzes the reductive cleavage of azo bond in aromatic azo compounds to the corresponding amines. Requires NADPH, but not NADH, as an electron donor for its activity. The enzyme can also reduce a wide range of sulfonated azo dyes. The substrate preference order is methyl red &gt; Ponceau BS, Ponceau S &gt; Orange II &gt; Amaranth.</text>
</comment>
<comment type="catalytic activity">
    <reaction>
        <text>N,N-dimethyl-1,4-phenylenediamine + anthranilate + 2 NAD(+) = 2-(4-dimethylaminophenyl)diazenylbenzoate + 2 NADH + 2 H(+)</text>
        <dbReference type="Rhea" id="RHEA:55872"/>
        <dbReference type="ChEBI" id="CHEBI:15378"/>
        <dbReference type="ChEBI" id="CHEBI:15783"/>
        <dbReference type="ChEBI" id="CHEBI:16567"/>
        <dbReference type="ChEBI" id="CHEBI:57540"/>
        <dbReference type="ChEBI" id="CHEBI:57945"/>
        <dbReference type="ChEBI" id="CHEBI:71579"/>
        <dbReference type="EC" id="1.7.1.17"/>
    </reaction>
</comment>
<comment type="cofactor">
    <cofactor evidence="1">
        <name>FMN</name>
        <dbReference type="ChEBI" id="CHEBI:58210"/>
    </cofactor>
</comment>
<comment type="biophysicochemical properties">
    <kinetics>
        <KM evidence="1">57 uM for methyl red</KM>
        <KM evidence="1">74 uM for NADPH</KM>
        <Vmax evidence="1">0.41 umol/min/mg enzyme toward methyl red</Vmax>
        <Vmax evidence="1">0.39 umol/min/mg enzyme toward NADPH</Vmax>
    </kinetics>
    <phDependence>
        <text evidence="1">Optimum pH is 6.0-6.6.</text>
    </phDependence>
    <temperatureDependence>
        <text evidence="1">Optimum temperature is 35-40 degrees Celsius. Inactive above 60 degrees Celsius. Thermostable up to 55 degrees Celsius.</text>
    </temperatureDependence>
</comment>
<comment type="subunit">
    <text evidence="1">Homotetramer.</text>
</comment>
<comment type="induction">
    <text>Constitutively expressed.</text>
</comment>
<comment type="similarity">
    <text evidence="2">Belongs to the azoreductase type 2 family.</text>
</comment>
<dbReference type="EC" id="1.7.1.17"/>
<dbReference type="EMBL" id="AY545994">
    <property type="protein sequence ID" value="AAT29034.1"/>
    <property type="molecule type" value="Genomic_DNA"/>
</dbReference>
<dbReference type="RefSeq" id="WP_000677261.1">
    <property type="nucleotide sequence ID" value="NZ_WYDB01000005.1"/>
</dbReference>
<dbReference type="SMR" id="Q50H63"/>
<dbReference type="OMA" id="ATHDSDY"/>
<dbReference type="BRENDA" id="1.7.1.6">
    <property type="organism ID" value="3352"/>
</dbReference>
<dbReference type="SABIO-RK" id="Q50H63"/>
<dbReference type="GO" id="GO:0005829">
    <property type="term" value="C:cytosol"/>
    <property type="evidence" value="ECO:0007669"/>
    <property type="project" value="TreeGrafter"/>
</dbReference>
<dbReference type="GO" id="GO:0010181">
    <property type="term" value="F:FMN binding"/>
    <property type="evidence" value="ECO:0007669"/>
    <property type="project" value="TreeGrafter"/>
</dbReference>
<dbReference type="GO" id="GO:0016491">
    <property type="term" value="F:oxidoreductase activity"/>
    <property type="evidence" value="ECO:0007669"/>
    <property type="project" value="UniProtKB-KW"/>
</dbReference>
<dbReference type="Gene3D" id="3.40.50.360">
    <property type="match status" value="1"/>
</dbReference>
<dbReference type="InterPro" id="IPR029039">
    <property type="entry name" value="Flavoprotein-like_sf"/>
</dbReference>
<dbReference type="InterPro" id="IPR005025">
    <property type="entry name" value="FMN_Rdtase-like_dom"/>
</dbReference>
<dbReference type="InterPro" id="IPR050712">
    <property type="entry name" value="NAD(P)H-dep_reductase"/>
</dbReference>
<dbReference type="PANTHER" id="PTHR30543">
    <property type="entry name" value="CHROMATE REDUCTASE"/>
    <property type="match status" value="1"/>
</dbReference>
<dbReference type="PANTHER" id="PTHR30543:SF21">
    <property type="entry name" value="NAD(P)H-DEPENDENT FMN REDUCTASE LOT6"/>
    <property type="match status" value="1"/>
</dbReference>
<dbReference type="Pfam" id="PF03358">
    <property type="entry name" value="FMN_red"/>
    <property type="match status" value="1"/>
</dbReference>
<dbReference type="SUPFAM" id="SSF52218">
    <property type="entry name" value="Flavoproteins"/>
    <property type="match status" value="1"/>
</dbReference>
<proteinExistence type="evidence at protein level"/>
<reference key="1">
    <citation type="journal article" date="2005" name="Microbiology">
        <title>Biochemical and molecular characterization of an azoreductase from Staphylococcus aureus, a tetrameric NADPH-dependent flavoprotein.</title>
        <authorList>
            <person name="Chen H."/>
            <person name="Hopper S.L."/>
            <person name="Cerniglia C.E."/>
            <person name="Wang R.-F."/>
        </authorList>
    </citation>
    <scope>NUCLEOTIDE SEQUENCE [GENOMIC DNA]</scope>
    <scope>PROTEIN SEQUENCE OF 1-9</scope>
    <scope>BIOPHYSICOCHEMICAL PROPERTIES</scope>
    <scope>SUBUNIT</scope>
    <scope>COFACTOR</scope>
    <scope>CHARACTERIZATION</scope>
    <source>
        <strain>ATCC 25923 / DSM 1104 / JCM 2413 / NBRC 14462 / NCIMB 12702 / NCTC 12981 / Seattle 1945</strain>
    </source>
</reference>
<feature type="chain" id="PRO_0000234086" description="FMN-dependent NADPH-azoreductase">
    <location>
        <begin position="1"/>
        <end position="188"/>
    </location>
</feature>
<sequence>MKGLIIIGSAQVNSHTSALARYLTEHFKTHDIEAEIFDLAEKPLNQLDFSGTTPSIDEIKQNMKDLKEKAMAADFLILGTPNYHGSYSGILKNALDHLNMDYFKMKPVGLIGNSGGIVSSEPLSHLRVIVRSLLGIAVPTQIATHDSDFAKNEDGSYYLNDSEFQLRARLFVDQIVSFVNNSPYEHLK</sequence>
<accession>Q50H63</accession>
<organism>
    <name type="scientific">Staphylococcus aureus</name>
    <dbReference type="NCBI Taxonomy" id="1280"/>
    <lineage>
        <taxon>Bacteria</taxon>
        <taxon>Bacillati</taxon>
        <taxon>Bacillota</taxon>
        <taxon>Bacilli</taxon>
        <taxon>Bacillales</taxon>
        <taxon>Staphylococcaceae</taxon>
        <taxon>Staphylococcus</taxon>
    </lineage>
</organism>
<gene>
    <name type="primary">azo1</name>
</gene>
<name>AZO1_STAAU</name>
<evidence type="ECO:0000269" key="1">
    <source>
    </source>
</evidence>
<evidence type="ECO:0000305" key="2"/>
<protein>
    <recommendedName>
        <fullName>FMN-dependent NADPH-azoreductase</fullName>
        <ecNumber>1.7.1.17</ecNumber>
    </recommendedName>
    <alternativeName>
        <fullName>NADPH-dependent flavo-azoreductase</fullName>
    </alternativeName>
    <alternativeName>
        <fullName>NADPH-flavin azoreductase</fullName>
    </alternativeName>
</protein>
<keyword id="KW-0903">Direct protein sequencing</keyword>
<keyword id="KW-0285">Flavoprotein</keyword>
<keyword id="KW-0288">FMN</keyword>
<keyword id="KW-0521">NADP</keyword>
<keyword id="KW-0560">Oxidoreductase</keyword>